<organism>
    <name type="scientific">Hylobates lar</name>
    <name type="common">Lar gibbon</name>
    <name type="synonym">White-handed gibbon</name>
    <dbReference type="NCBI Taxonomy" id="9580"/>
    <lineage>
        <taxon>Eukaryota</taxon>
        <taxon>Metazoa</taxon>
        <taxon>Chordata</taxon>
        <taxon>Craniata</taxon>
        <taxon>Vertebrata</taxon>
        <taxon>Euteleostomi</taxon>
        <taxon>Mammalia</taxon>
        <taxon>Eutheria</taxon>
        <taxon>Euarchontoglires</taxon>
        <taxon>Primates</taxon>
        <taxon>Haplorrhini</taxon>
        <taxon>Catarrhini</taxon>
        <taxon>Hylobatidae</taxon>
        <taxon>Hylobates</taxon>
    </lineage>
</organism>
<accession>Q4AEH1</accession>
<protein>
    <recommendedName>
        <fullName evidence="1">Phospholipid hydroperoxide glutathione peroxidase</fullName>
        <shortName evidence="1">PHGPx</shortName>
        <ecNumber evidence="1">1.11.1.12</ecNumber>
    </recommendedName>
    <alternativeName>
        <fullName evidence="1">Glutathione peroxidase 4</fullName>
        <shortName evidence="1">GPx-4</shortName>
        <shortName evidence="1">GSHPx-4</shortName>
        <ecNumber evidence="3">1.11.1.9</ecNumber>
    </alternativeName>
</protein>
<keyword id="KW-0024">Alternative initiation</keyword>
<keyword id="KW-0963">Cytoplasm</keyword>
<keyword id="KW-0217">Developmental protein</keyword>
<keyword id="KW-0443">Lipid metabolism</keyword>
<keyword id="KW-0496">Mitochondrion</keyword>
<keyword id="KW-0560">Oxidoreductase</keyword>
<keyword id="KW-0575">Peroxidase</keyword>
<keyword id="KW-0597">Phosphoprotein</keyword>
<keyword id="KW-0712">Selenocysteine</keyword>
<keyword id="KW-0809">Transit peptide</keyword>
<dbReference type="EC" id="1.11.1.12" evidence="1"/>
<dbReference type="EC" id="1.11.1.9" evidence="3"/>
<dbReference type="EMBL" id="AB121011">
    <property type="protein sequence ID" value="BAE17019.1"/>
    <property type="molecule type" value="mRNA"/>
</dbReference>
<dbReference type="PeroxiBase" id="3699">
    <property type="entry name" value="HlGPx04"/>
</dbReference>
<dbReference type="GO" id="GO:0005829">
    <property type="term" value="C:cytosol"/>
    <property type="evidence" value="ECO:0000250"/>
    <property type="project" value="UniProtKB"/>
</dbReference>
<dbReference type="GO" id="GO:0005739">
    <property type="term" value="C:mitochondrion"/>
    <property type="evidence" value="ECO:0007669"/>
    <property type="project" value="UniProtKB-SubCell"/>
</dbReference>
<dbReference type="GO" id="GO:0005634">
    <property type="term" value="C:nucleus"/>
    <property type="evidence" value="ECO:0007669"/>
    <property type="project" value="TreeGrafter"/>
</dbReference>
<dbReference type="GO" id="GO:0004602">
    <property type="term" value="F:glutathione peroxidase activity"/>
    <property type="evidence" value="ECO:0000250"/>
    <property type="project" value="UniProtKB"/>
</dbReference>
<dbReference type="GO" id="GO:0047066">
    <property type="term" value="F:phospholipid-hydroperoxide glutathione peroxidase activity"/>
    <property type="evidence" value="ECO:0000250"/>
    <property type="project" value="UniProtKB"/>
</dbReference>
<dbReference type="GO" id="GO:0019369">
    <property type="term" value="P:arachidonate metabolic process"/>
    <property type="evidence" value="ECO:0000250"/>
    <property type="project" value="UniProtKB"/>
</dbReference>
<dbReference type="GO" id="GO:0019372">
    <property type="term" value="P:lipoxygenase pathway"/>
    <property type="evidence" value="ECO:0000250"/>
    <property type="project" value="UniProtKB"/>
</dbReference>
<dbReference type="GO" id="GO:0110076">
    <property type="term" value="P:negative regulation of ferroptosis"/>
    <property type="evidence" value="ECO:0000250"/>
    <property type="project" value="UniProtKB"/>
</dbReference>
<dbReference type="GO" id="GO:0006979">
    <property type="term" value="P:response to oxidative stress"/>
    <property type="evidence" value="ECO:0000250"/>
    <property type="project" value="UniProtKB"/>
</dbReference>
<dbReference type="GO" id="GO:0007283">
    <property type="term" value="P:spermatogenesis"/>
    <property type="evidence" value="ECO:0000250"/>
    <property type="project" value="UniProtKB"/>
</dbReference>
<dbReference type="CDD" id="cd00340">
    <property type="entry name" value="GSH_Peroxidase"/>
    <property type="match status" value="1"/>
</dbReference>
<dbReference type="FunFam" id="3.40.30.10:FF:000111">
    <property type="entry name" value="Glutathione peroxidase"/>
    <property type="match status" value="1"/>
</dbReference>
<dbReference type="Gene3D" id="3.40.30.10">
    <property type="entry name" value="Glutaredoxin"/>
    <property type="match status" value="1"/>
</dbReference>
<dbReference type="InterPro" id="IPR000889">
    <property type="entry name" value="Glutathione_peroxidase"/>
</dbReference>
<dbReference type="InterPro" id="IPR029759">
    <property type="entry name" value="GPX_AS"/>
</dbReference>
<dbReference type="InterPro" id="IPR029760">
    <property type="entry name" value="GPX_CS"/>
</dbReference>
<dbReference type="InterPro" id="IPR036249">
    <property type="entry name" value="Thioredoxin-like_sf"/>
</dbReference>
<dbReference type="PANTHER" id="PTHR11592">
    <property type="entry name" value="GLUTATHIONE PEROXIDASE"/>
    <property type="match status" value="1"/>
</dbReference>
<dbReference type="PANTHER" id="PTHR11592:SF134">
    <property type="entry name" value="PHOSPHOLIPID HYDROPEROXIDE GLUTATHIONE PEROXIDASE"/>
    <property type="match status" value="1"/>
</dbReference>
<dbReference type="Pfam" id="PF00255">
    <property type="entry name" value="GSHPx"/>
    <property type="match status" value="1"/>
</dbReference>
<dbReference type="PIRSF" id="PIRSF000303">
    <property type="entry name" value="Glutathion_perox"/>
    <property type="match status" value="1"/>
</dbReference>
<dbReference type="PRINTS" id="PR01011">
    <property type="entry name" value="GLUTPROXDASE"/>
</dbReference>
<dbReference type="SUPFAM" id="SSF52833">
    <property type="entry name" value="Thioredoxin-like"/>
    <property type="match status" value="1"/>
</dbReference>
<dbReference type="PROSITE" id="PS00460">
    <property type="entry name" value="GLUTATHIONE_PEROXID_1"/>
    <property type="match status" value="1"/>
</dbReference>
<dbReference type="PROSITE" id="PS00763">
    <property type="entry name" value="GLUTATHIONE_PEROXID_2"/>
    <property type="match status" value="1"/>
</dbReference>
<dbReference type="PROSITE" id="PS51355">
    <property type="entry name" value="GLUTATHIONE_PEROXID_3"/>
    <property type="match status" value="1"/>
</dbReference>
<feature type="transit peptide" description="Mitochondrion" evidence="5">
    <location>
        <begin position="1"/>
        <end status="unknown"/>
    </location>
</feature>
<feature type="chain" id="PRO_0000042609" description="Phospholipid hydroperoxide glutathione peroxidase">
    <location>
        <begin status="unknown"/>
        <end position="197"/>
    </location>
</feature>
<feature type="active site" evidence="1">
    <location>
        <position position="73"/>
    </location>
</feature>
<feature type="non-standard amino acid" description="Selenocysteine" evidence="1">
    <location>
        <position position="73"/>
    </location>
</feature>
<feature type="modified residue" description="Phosphoserine" evidence="4">
    <location>
        <position position="40"/>
    </location>
</feature>
<feature type="splice variant" id="VSP_018741" description="In isoform Cytoplasmic." evidence="6">
    <location>
        <begin position="1"/>
        <end position="27"/>
    </location>
</feature>
<evidence type="ECO:0000250" key="1">
    <source>
        <dbReference type="UniProtKB" id="O70325"/>
    </source>
</evidence>
<evidence type="ECO:0000250" key="2">
    <source>
        <dbReference type="UniProtKB" id="P36968"/>
    </source>
</evidence>
<evidence type="ECO:0000250" key="3">
    <source>
        <dbReference type="UniProtKB" id="P36969"/>
    </source>
</evidence>
<evidence type="ECO:0000250" key="4">
    <source>
        <dbReference type="UniProtKB" id="P36970"/>
    </source>
</evidence>
<evidence type="ECO:0000255" key="5"/>
<evidence type="ECO:0000305" key="6"/>
<proteinExistence type="evidence at transcript level"/>
<comment type="function">
    <text evidence="1 2 3">Essential antioxidant peroxidase that directly reduces phospholipid hydroperoxide even if they are incorporated in membranes and lipoproteins (By similarity). Can also reduce fatty acid hydroperoxide, cholesterol hydroperoxide and thymine hydroperoxide (By similarity). Plays a key role in protecting cells from oxidative damage by preventing membrane lipid peroxidation (By similarity). Required to prevent cells from ferroptosis, a non-apoptotic cell death resulting from an iron-dependent accumulation of lipid reactive oxygen species (By similarity). The presence of selenocysteine (Sec) versus Cys at the active site is essential for life: it provides resistance to overoxidation and prevents cells against ferroptosis (By similarity). The presence of Sec at the active site is also essential for the survival of a specific type of parvalbumin-positive interneurons, thereby preventing against fatal epileptic seizures (By similarity). May be required to protect cells from the toxicity of ingested lipid hydroperoxides (By similarity). Required for normal sperm development and male fertility (By similarity). Essential for maturation and survival of photoreceptor cells (By similarity). Plays a role in a primary T-cell response to viral and parasitic infection by protecting T-cells from ferroptosis and by supporting T-cell expansion (By similarity). Plays a role of glutathione peroxidase in platelets in the arachidonic acid metabolism (By similarity). Reduces hydroperoxy ester lipids formed by a 15-lipoxygenase that may play a role as down-regulator of the cellular 15-lipoxygenase pathway (By similarity). Can also reduce small soluble hydroperoxides such as H2O2, cumene hydroperoxide and tert-butyl hydroperoxide (By similarity).</text>
</comment>
<comment type="catalytic activity">
    <reaction evidence="2">
        <text>a hydroperoxy polyunsaturated fatty acid + 2 glutathione = a hydroxy polyunsaturated fatty acid + glutathione disulfide + H2O</text>
        <dbReference type="Rhea" id="RHEA:19057"/>
        <dbReference type="ChEBI" id="CHEBI:15377"/>
        <dbReference type="ChEBI" id="CHEBI:57925"/>
        <dbReference type="ChEBI" id="CHEBI:58297"/>
        <dbReference type="ChEBI" id="CHEBI:131871"/>
        <dbReference type="ChEBI" id="CHEBI:134019"/>
        <dbReference type="EC" id="1.11.1.12"/>
    </reaction>
    <physiologicalReaction direction="left-to-right" evidence="2">
        <dbReference type="Rhea" id="RHEA:19058"/>
    </physiologicalReaction>
</comment>
<comment type="catalytic activity">
    <reaction evidence="3">
        <text>2 glutathione + H2O2 = glutathione disulfide + 2 H2O</text>
        <dbReference type="Rhea" id="RHEA:16833"/>
        <dbReference type="ChEBI" id="CHEBI:15377"/>
        <dbReference type="ChEBI" id="CHEBI:16240"/>
        <dbReference type="ChEBI" id="CHEBI:57925"/>
        <dbReference type="ChEBI" id="CHEBI:58297"/>
        <dbReference type="EC" id="1.11.1.9"/>
    </reaction>
    <physiologicalReaction direction="left-to-right" evidence="3">
        <dbReference type="Rhea" id="RHEA:16834"/>
    </physiologicalReaction>
</comment>
<comment type="catalytic activity">
    <reaction evidence="3">
        <text>tert-butyl hydroperoxide + 2 glutathione = tert-butanol + glutathione disulfide + H2O</text>
        <dbReference type="Rhea" id="RHEA:69412"/>
        <dbReference type="ChEBI" id="CHEBI:15377"/>
        <dbReference type="ChEBI" id="CHEBI:45895"/>
        <dbReference type="ChEBI" id="CHEBI:57925"/>
        <dbReference type="ChEBI" id="CHEBI:58297"/>
        <dbReference type="ChEBI" id="CHEBI:64090"/>
    </reaction>
    <physiologicalReaction direction="left-to-right" evidence="3">
        <dbReference type="Rhea" id="RHEA:69413"/>
    </physiologicalReaction>
</comment>
<comment type="catalytic activity">
    <reaction evidence="3">
        <text>cumene hydroperoxide + 2 glutathione = 2-phenylpropan-2-ol + glutathione disulfide + H2O</text>
        <dbReference type="Rhea" id="RHEA:69651"/>
        <dbReference type="ChEBI" id="CHEBI:15377"/>
        <dbReference type="ChEBI" id="CHEBI:57925"/>
        <dbReference type="ChEBI" id="CHEBI:58297"/>
        <dbReference type="ChEBI" id="CHEBI:78673"/>
        <dbReference type="ChEBI" id="CHEBI:131607"/>
    </reaction>
    <physiologicalReaction direction="left-to-right" evidence="3">
        <dbReference type="Rhea" id="RHEA:69652"/>
    </physiologicalReaction>
</comment>
<comment type="catalytic activity">
    <reaction evidence="3">
        <text>(9S)-hydroperoxy-(10E,12Z)-octadecadienoate + 2 glutathione = (9S)-hydroxy-(10E,12Z)-octadecadienoate + glutathione disulfide + H2O</text>
        <dbReference type="Rhea" id="RHEA:76687"/>
        <dbReference type="ChEBI" id="CHEBI:15377"/>
        <dbReference type="ChEBI" id="CHEBI:57925"/>
        <dbReference type="ChEBI" id="CHEBI:58297"/>
        <dbReference type="ChEBI" id="CHEBI:60955"/>
        <dbReference type="ChEBI" id="CHEBI:77852"/>
    </reaction>
    <physiologicalReaction direction="left-to-right" evidence="3">
        <dbReference type="Rhea" id="RHEA:76688"/>
    </physiologicalReaction>
</comment>
<comment type="catalytic activity">
    <reaction evidence="3">
        <text>(13S)-hydroperoxy-(9Z,11E)-octadecadienoate + 2 glutathione = (13S)-hydroxy-(9Z,11E)-octadecadienoate + glutathione disulfide + H2O</text>
        <dbReference type="Rhea" id="RHEA:48888"/>
        <dbReference type="ChEBI" id="CHEBI:15377"/>
        <dbReference type="ChEBI" id="CHEBI:57466"/>
        <dbReference type="ChEBI" id="CHEBI:57925"/>
        <dbReference type="ChEBI" id="CHEBI:58297"/>
        <dbReference type="ChEBI" id="CHEBI:90850"/>
    </reaction>
    <physiologicalReaction direction="left-to-right" evidence="3">
        <dbReference type="Rhea" id="RHEA:48889"/>
    </physiologicalReaction>
</comment>
<comment type="catalytic activity">
    <reaction evidence="3">
        <text>(5S)-hydroperoxy-(6E,8Z,11Z,14Z)-eicosatetraenoate + 2 glutathione = (5S)-hydroxy-(6E,8Z,11Z,14Z)-eicosatetraenoate + glutathione disulfide + H2O</text>
        <dbReference type="Rhea" id="RHEA:48620"/>
        <dbReference type="ChEBI" id="CHEBI:15377"/>
        <dbReference type="ChEBI" id="CHEBI:57450"/>
        <dbReference type="ChEBI" id="CHEBI:57925"/>
        <dbReference type="ChEBI" id="CHEBI:58297"/>
        <dbReference type="ChEBI" id="CHEBI:90632"/>
    </reaction>
    <physiologicalReaction direction="left-to-right" evidence="3">
        <dbReference type="Rhea" id="RHEA:48621"/>
    </physiologicalReaction>
</comment>
<comment type="catalytic activity">
    <reaction evidence="3">
        <text>(12R)-hydroperoxy-(5Z,8Z,10E,14Z)-eicosatetraenoate + 2 glutathione = (12R)-hydroxy-(5Z,8Z,10E,14Z)-eicosatetraenoate + glutathione disulfide + H2O</text>
        <dbReference type="Rhea" id="RHEA:76691"/>
        <dbReference type="ChEBI" id="CHEBI:15377"/>
        <dbReference type="ChEBI" id="CHEBI:57925"/>
        <dbReference type="ChEBI" id="CHEBI:58297"/>
        <dbReference type="ChEBI" id="CHEBI:75230"/>
        <dbReference type="ChEBI" id="CHEBI:83343"/>
    </reaction>
    <physiologicalReaction direction="left-to-right" evidence="3">
        <dbReference type="Rhea" id="RHEA:76692"/>
    </physiologicalReaction>
</comment>
<comment type="catalytic activity">
    <reaction evidence="3">
        <text>(12S)-hydroperoxy-(5Z,8Z,10E,14Z)-eicosatetraenoate + 2 glutathione = (12S)-hydroxy-(5Z,8Z,10E,14Z)-eicosatetraenoate + glutathione disulfide + H2O</text>
        <dbReference type="Rhea" id="RHEA:50708"/>
        <dbReference type="ChEBI" id="CHEBI:15377"/>
        <dbReference type="ChEBI" id="CHEBI:57444"/>
        <dbReference type="ChEBI" id="CHEBI:57925"/>
        <dbReference type="ChEBI" id="CHEBI:58297"/>
        <dbReference type="ChEBI" id="CHEBI:90680"/>
    </reaction>
    <physiologicalReaction direction="left-to-right" evidence="3">
        <dbReference type="Rhea" id="RHEA:50709"/>
    </physiologicalReaction>
</comment>
<comment type="catalytic activity">
    <reaction evidence="3">
        <text>(15S)-hydroperoxy-(5Z,8Z,11Z,13E)-eicosatetraenoate + 2 glutathione = (15S)-hydroxy-(5Z,8Z,11Z,13E)-eicosatetraenoate + glutathione disulfide + H2O</text>
        <dbReference type="Rhea" id="RHEA:76695"/>
        <dbReference type="ChEBI" id="CHEBI:15377"/>
        <dbReference type="ChEBI" id="CHEBI:57409"/>
        <dbReference type="ChEBI" id="CHEBI:57446"/>
        <dbReference type="ChEBI" id="CHEBI:57925"/>
        <dbReference type="ChEBI" id="CHEBI:58297"/>
    </reaction>
    <physiologicalReaction direction="left-to-right" evidence="3">
        <dbReference type="Rhea" id="RHEA:76696"/>
    </physiologicalReaction>
</comment>
<comment type="catalytic activity">
    <reaction evidence="3">
        <text>(5S)-hydroperoxy-(6E,8Z,11Z,14Z,17Z)-eicosapentaenoate + 2 glutathione = (5S)-hydroxy-(6E,8Z,11Z,14Z,17Z)-eicosapentaenoate + glutathione disulfide + H2O</text>
        <dbReference type="Rhea" id="RHEA:76699"/>
        <dbReference type="ChEBI" id="CHEBI:15377"/>
        <dbReference type="ChEBI" id="CHEBI:57925"/>
        <dbReference type="ChEBI" id="CHEBI:58297"/>
        <dbReference type="ChEBI" id="CHEBI:195399"/>
        <dbReference type="ChEBI" id="CHEBI:195400"/>
    </reaction>
    <physiologicalReaction direction="left-to-right" evidence="3">
        <dbReference type="Rhea" id="RHEA:76700"/>
    </physiologicalReaction>
</comment>
<comment type="catalytic activity">
    <reaction evidence="3">
        <text>(12S)-hydroperoxy-(5Z,8Z,10E,14Z,17Z)-eicosapentaenoate + 2 glutathione = (12S)-hydroxy-(5Z,8Z,10E,14Z,17Z)-eicosapentaenoate + glutathione disulfide + H2O</text>
        <dbReference type="Rhea" id="RHEA:76703"/>
        <dbReference type="ChEBI" id="CHEBI:15377"/>
        <dbReference type="ChEBI" id="CHEBI:57925"/>
        <dbReference type="ChEBI" id="CHEBI:58297"/>
        <dbReference type="ChEBI" id="CHEBI:90772"/>
        <dbReference type="ChEBI" id="CHEBI:195401"/>
    </reaction>
    <physiologicalReaction direction="left-to-right" evidence="3">
        <dbReference type="Rhea" id="RHEA:76704"/>
    </physiologicalReaction>
</comment>
<comment type="catalytic activity">
    <reaction evidence="3">
        <text>(15S)-hydroperoxy-(5Z,8Z,11Z,13E,17Z)-eicosapentaenoate + 2 glutathione = (15S)-hydroxy-(5Z,8Z,11Z,13E,17Z)-eicosapentaenoate + glutathione disulfide + H2O</text>
        <dbReference type="Rhea" id="RHEA:76707"/>
        <dbReference type="ChEBI" id="CHEBI:15377"/>
        <dbReference type="ChEBI" id="CHEBI:57925"/>
        <dbReference type="ChEBI" id="CHEBI:58297"/>
        <dbReference type="ChEBI" id="CHEBI:132087"/>
        <dbReference type="ChEBI" id="CHEBI:194369"/>
    </reaction>
    <physiologicalReaction direction="left-to-right" evidence="3">
        <dbReference type="Rhea" id="RHEA:76708"/>
    </physiologicalReaction>
</comment>
<comment type="catalytic activity">
    <reaction evidence="3">
        <text>(15S)-hydroperoxy-(11Z,13E)-eicosadienoate + 2 glutathione = (15S)-hydroxy-(11Z,13E)-eicosadienoate + glutathione disulfide + H2O</text>
        <dbReference type="Rhea" id="RHEA:76711"/>
        <dbReference type="ChEBI" id="CHEBI:15377"/>
        <dbReference type="ChEBI" id="CHEBI:57925"/>
        <dbReference type="ChEBI" id="CHEBI:58297"/>
        <dbReference type="ChEBI" id="CHEBI:144832"/>
        <dbReference type="ChEBI" id="CHEBI:195402"/>
    </reaction>
    <physiologicalReaction direction="left-to-right" evidence="3">
        <dbReference type="Rhea" id="RHEA:76712"/>
    </physiologicalReaction>
</comment>
<comment type="catalytic activity">
    <reaction evidence="3">
        <text>(17S)-hydroperoxy-(4Z,7Z,10Z,13Z,15E,19Z)-docosahexaenoate + 2 glutathione = (17S)-hydroxy-(4Z,7Z,10Z,13Z,15E,19Z)-docosahexaenoate + glutathione disulfide + H2O</text>
        <dbReference type="Rhea" id="RHEA:76715"/>
        <dbReference type="ChEBI" id="CHEBI:15377"/>
        <dbReference type="ChEBI" id="CHEBI:57925"/>
        <dbReference type="ChEBI" id="CHEBI:58297"/>
        <dbReference type="ChEBI" id="CHEBI:133795"/>
        <dbReference type="ChEBI" id="CHEBI:195403"/>
    </reaction>
    <physiologicalReaction direction="left-to-right" evidence="3">
        <dbReference type="Rhea" id="RHEA:76716"/>
    </physiologicalReaction>
</comment>
<comment type="catalytic activity">
    <reaction evidence="3">
        <text>a hydroperoxy-1,2-diacyl-glycero-3-phosphocholine + 2 glutathione = a hydroxy-1,2-diacyl-glycero-3-phosphocholine + glutathione disulfide + H2O</text>
        <dbReference type="Rhea" id="RHEA:76731"/>
        <dbReference type="ChEBI" id="CHEBI:15377"/>
        <dbReference type="ChEBI" id="CHEBI:57925"/>
        <dbReference type="ChEBI" id="CHEBI:58297"/>
        <dbReference type="ChEBI" id="CHEBI:195423"/>
        <dbReference type="ChEBI" id="CHEBI:195424"/>
    </reaction>
    <physiologicalReaction direction="left-to-right" evidence="3">
        <dbReference type="Rhea" id="RHEA:76732"/>
    </physiologicalReaction>
</comment>
<comment type="subunit">
    <text evidence="3">Monomer. Has a tendency to form higher mass oligomers. Interacts with FUNDC1; this interaction promotes GPX4 recruitment into mitochondria through TOM/TIM complex where it is degraded by mitophagy.</text>
</comment>
<comment type="subcellular location">
    <molecule>Isoform Mitochondrial</molecule>
    <subcellularLocation>
        <location evidence="1">Mitochondrion</location>
    </subcellularLocation>
</comment>
<comment type="subcellular location">
    <molecule>Isoform Cytoplasmic</molecule>
    <subcellularLocation>
        <location evidence="1">Cytoplasm</location>
    </subcellularLocation>
</comment>
<comment type="alternative products">
    <event type="alternative initiation"/>
    <isoform>
        <id>Q4AEH1-1</id>
        <name>Mitochondrial</name>
        <sequence type="displayed"/>
    </isoform>
    <isoform>
        <id>Q4AEH1-2</id>
        <name>Cytoplasmic</name>
        <sequence type="described" ref="VSP_018741"/>
    </isoform>
</comment>
<comment type="similarity">
    <text evidence="6">Belongs to the glutathione peroxidase family.</text>
</comment>
<sequence>MSLGRLCRLLMPALLCGALAAPGLAGTMCASRDDWRCAGSMHEFSAKVLDGHTVNLDKYRGFVCIVTNVASQUGKTEVNYTQLVDLHARYAECGLRFLAFPCNQFGKQEPGSNEEIKEFAAGYNVKFDMFSKICVNGDDAHPLWKWMKIQPKGKGILGNAIKWNFTKFLFDKNGCVVKRYGPMEEPLVLEKDLPHYF</sequence>
<gene>
    <name evidence="1" type="primary">GPX4</name>
</gene>
<reference key="1">
    <citation type="journal article" date="2005" name="Comp. Biochem. Physiol.">
        <title>Structure, gene expression, and evolution of primate glutathione peroxidases.</title>
        <authorList>
            <person name="Fukuhara R."/>
            <person name="Kageyama T."/>
        </authorList>
    </citation>
    <scope>NUCLEOTIDE SEQUENCE [MRNA]</scope>
</reference>
<name>GPX4_HYLLA</name>